<proteinExistence type="evidence at protein level"/>
<gene>
    <name type="primary">zfp36l2-A</name>
</gene>
<reference evidence="13" key="1">
    <citation type="submission" date="2003-01" db="EMBL/GenBank/DDBJ databases">
        <authorList>
            <consortium name="NIH - Xenopus Gene Collection (XGC) project"/>
        </authorList>
    </citation>
    <scope>NUCLEOTIDE SEQUENCE [LARGE SCALE MRNA]</scope>
    <source>
        <tissue evidence="13">Tail bud</tissue>
    </source>
</reference>
<reference evidence="11 12" key="2">
    <citation type="journal article" date="1999" name="Gene">
        <title>Identification of four CCCH zinc finger proteins in Xenopus, including a novel vertebrate protein with four zinc fingers and severely restricted expression.</title>
        <authorList>
            <person name="De J."/>
            <person name="Lai W.S."/>
            <person name="Thorn J.M."/>
            <person name="Goldsworthy S.M."/>
            <person name="Liu X."/>
            <person name="Blackwell T.K."/>
            <person name="Blackshear P.J."/>
        </authorList>
    </citation>
    <scope>NUCLEOTIDE SEQUENCE [MRNA] OF N-TERMINUS</scope>
    <scope>TISSUE SPECIFICITY</scope>
    <scope>DEVELOPMENTAL STAGE</scope>
    <source>
        <tissue evidence="6">Egg</tissue>
    </source>
</reference>
<reference key="3">
    <citation type="journal article" date="2000" name="J. Biol. Chem.">
        <title>Interactions of CCCH zinc finger proteins with mRNA. Binding of tristetraprolin-related zinc finger proteins to Au-rich elements and destabilization of mRNA.</title>
        <authorList>
            <person name="Lai W.S."/>
            <person name="Carballo E."/>
            <person name="Thorn J.M."/>
            <person name="Kennington E.A."/>
            <person name="Blackshear P.J."/>
        </authorList>
    </citation>
    <scope>FUNCTION</scope>
    <scope>RNA-BINDING</scope>
</reference>
<reference key="4">
    <citation type="journal article" date="2001" name="J. Biol. Chem.">
        <title>Interactions of CCCH zinc finger proteins with mRNA: tristetraprolin-mediated AU-rich element-dependent mRNA degradation can occur in the absence of a poly(A) tail.</title>
        <authorList>
            <person name="Lai W.S."/>
            <person name="Blackshear P.J."/>
        </authorList>
    </citation>
    <scope>FUNCTION</scope>
</reference>
<reference key="5">
    <citation type="journal article" date="2003" name="Mol. Cell. Biol.">
        <title>Tristetraprolin and its family members can promote the cell-free deadenylation of AU-rich element-containing mRNAs by poly(A) ribonuclease.</title>
        <authorList>
            <person name="Lai W.S."/>
            <person name="Kennington E.A."/>
            <person name="Blackshear P.J."/>
        </authorList>
    </citation>
    <scope>FUNCTION</scope>
    <scope>RNA-BINDING</scope>
</reference>
<feature type="chain" id="PRO_0000397913" description="mRNA decay activator protein ZFP36L2-A">
    <location>
        <begin position="1"/>
        <end position="363"/>
    </location>
</feature>
<feature type="zinc finger region" description="C3H1-type 1" evidence="4">
    <location>
        <begin position="131"/>
        <end position="159"/>
    </location>
</feature>
<feature type="zinc finger region" description="C3H1-type 2" evidence="4">
    <location>
        <begin position="169"/>
        <end position="197"/>
    </location>
</feature>
<feature type="region of interest" description="RNA-binding" evidence="2">
    <location>
        <begin position="148"/>
        <end position="189"/>
    </location>
</feature>
<feature type="region of interest" description="Disordered" evidence="5">
    <location>
        <begin position="308"/>
        <end position="349"/>
    </location>
</feature>
<feature type="short sequence motif" description="RNA-binding" evidence="2">
    <location>
        <begin position="131"/>
        <end position="136"/>
    </location>
</feature>
<feature type="compositionally biased region" description="Low complexity" evidence="5">
    <location>
        <begin position="328"/>
        <end position="347"/>
    </location>
</feature>
<keyword id="KW-0963">Cytoplasm</keyword>
<keyword id="KW-0217">Developmental protein</keyword>
<keyword id="KW-0479">Metal-binding</keyword>
<keyword id="KW-0539">Nucleus</keyword>
<keyword id="KW-1185">Reference proteome</keyword>
<keyword id="KW-0677">Repeat</keyword>
<keyword id="KW-0687">Ribonucleoprotein</keyword>
<keyword id="KW-0694">RNA-binding</keyword>
<keyword id="KW-0862">Zinc</keyword>
<keyword id="KW-0863">Zinc-finger</keyword>
<dbReference type="EMBL" id="BC044086">
    <property type="protein sequence ID" value="AAH44086.1"/>
    <property type="molecule type" value="mRNA"/>
</dbReference>
<dbReference type="EMBL" id="AF061982">
    <property type="protein sequence ID" value="AAD24209.1"/>
    <property type="status" value="ALT_SEQ"/>
    <property type="molecule type" value="mRNA"/>
</dbReference>
<dbReference type="SMR" id="Q7ZXW9"/>
<dbReference type="BioGRID" id="98544">
    <property type="interactions" value="1"/>
</dbReference>
<dbReference type="IntAct" id="Q7ZXW9">
    <property type="interactions" value="1"/>
</dbReference>
<dbReference type="DNASU" id="380302"/>
<dbReference type="GeneID" id="380302"/>
<dbReference type="KEGG" id="xla:380302"/>
<dbReference type="AGR" id="Xenbase:XB-GENE-6256550"/>
<dbReference type="CTD" id="380302"/>
<dbReference type="Xenbase" id="XB-GENE-6256550">
    <property type="gene designation" value="zfp36l2.S"/>
</dbReference>
<dbReference type="OMA" id="QDMNMNA"/>
<dbReference type="OrthoDB" id="410307at2759"/>
<dbReference type="Proteomes" id="UP000186698">
    <property type="component" value="Chromosome 5S"/>
</dbReference>
<dbReference type="Bgee" id="380302">
    <property type="expression patterns" value="Expressed in internal ear and 19 other cell types or tissues"/>
</dbReference>
<dbReference type="GO" id="GO:0005737">
    <property type="term" value="C:cytoplasm"/>
    <property type="evidence" value="ECO:0000250"/>
    <property type="project" value="UniProtKB"/>
</dbReference>
<dbReference type="GO" id="GO:0005634">
    <property type="term" value="C:nucleus"/>
    <property type="evidence" value="ECO:0000250"/>
    <property type="project" value="UniProtKB"/>
</dbReference>
<dbReference type="GO" id="GO:1990904">
    <property type="term" value="C:ribonucleoprotein complex"/>
    <property type="evidence" value="ECO:0007669"/>
    <property type="project" value="UniProtKB-KW"/>
</dbReference>
<dbReference type="GO" id="GO:0035925">
    <property type="term" value="F:mRNA 3'-UTR AU-rich region binding"/>
    <property type="evidence" value="ECO:0000314"/>
    <property type="project" value="UniProtKB"/>
</dbReference>
<dbReference type="GO" id="GO:0008270">
    <property type="term" value="F:zinc ion binding"/>
    <property type="evidence" value="ECO:0007669"/>
    <property type="project" value="UniProtKB-KW"/>
</dbReference>
<dbReference type="GO" id="GO:0061158">
    <property type="term" value="P:3'-UTR-mediated mRNA destabilization"/>
    <property type="evidence" value="ECO:0000250"/>
    <property type="project" value="UniProtKB"/>
</dbReference>
<dbReference type="GO" id="GO:0071364">
    <property type="term" value="P:cellular response to epidermal growth factor stimulus"/>
    <property type="evidence" value="ECO:0000250"/>
    <property type="project" value="UniProtKB"/>
</dbReference>
<dbReference type="GO" id="GO:0044344">
    <property type="term" value="P:cellular response to fibroblast growth factor stimulus"/>
    <property type="evidence" value="ECO:0000250"/>
    <property type="project" value="UniProtKB"/>
</dbReference>
<dbReference type="GO" id="GO:0071385">
    <property type="term" value="P:cellular response to glucocorticoid stimulus"/>
    <property type="evidence" value="ECO:0000250"/>
    <property type="project" value="UniProtKB"/>
</dbReference>
<dbReference type="GO" id="GO:0097011">
    <property type="term" value="P:cellular response to granulocyte macrophage colony-stimulating factor stimulus"/>
    <property type="evidence" value="ECO:0000250"/>
    <property type="project" value="UniProtKB"/>
</dbReference>
<dbReference type="GO" id="GO:0071560">
    <property type="term" value="P:cellular response to transforming growth factor beta stimulus"/>
    <property type="evidence" value="ECO:0000250"/>
    <property type="project" value="UniProtKB"/>
</dbReference>
<dbReference type="GO" id="GO:0071356">
    <property type="term" value="P:cellular response to tumor necrosis factor"/>
    <property type="evidence" value="ECO:0000250"/>
    <property type="project" value="UniProtKB"/>
</dbReference>
<dbReference type="GO" id="GO:0060216">
    <property type="term" value="P:definitive hemopoiesis"/>
    <property type="evidence" value="ECO:0000250"/>
    <property type="project" value="UniProtKB"/>
</dbReference>
<dbReference type="GO" id="GO:0070371">
    <property type="term" value="P:ERK1 and ERK2 cascade"/>
    <property type="evidence" value="ECO:0000250"/>
    <property type="project" value="UniProtKB"/>
</dbReference>
<dbReference type="GO" id="GO:0030097">
    <property type="term" value="P:hemopoiesis"/>
    <property type="evidence" value="ECO:0000250"/>
    <property type="project" value="UniProtKB"/>
</dbReference>
<dbReference type="GO" id="GO:0000165">
    <property type="term" value="P:MAPK cascade"/>
    <property type="evidence" value="ECO:0000250"/>
    <property type="project" value="UniProtKB"/>
</dbReference>
<dbReference type="GO" id="GO:0006402">
    <property type="term" value="P:mRNA catabolic process"/>
    <property type="evidence" value="ECO:0000250"/>
    <property type="project" value="UniProtKB"/>
</dbReference>
<dbReference type="GO" id="GO:0045599">
    <property type="term" value="P:negative regulation of fat cell differentiation"/>
    <property type="evidence" value="ECO:0000250"/>
    <property type="project" value="UniProtKB"/>
</dbReference>
<dbReference type="GO" id="GO:1901991">
    <property type="term" value="P:negative regulation of mitotic cell cycle phase transition"/>
    <property type="evidence" value="ECO:0000250"/>
    <property type="project" value="UniProtKB"/>
</dbReference>
<dbReference type="GO" id="GO:2000737">
    <property type="term" value="P:negative regulation of stem cell differentiation"/>
    <property type="evidence" value="ECO:0000250"/>
    <property type="project" value="UniProtKB"/>
</dbReference>
<dbReference type="GO" id="GO:0000288">
    <property type="term" value="P:nuclear-transcribed mRNA catabolic process, deadenylation-dependent decay"/>
    <property type="evidence" value="ECO:0000250"/>
    <property type="project" value="UniProtKB"/>
</dbReference>
<dbReference type="GO" id="GO:0031086">
    <property type="term" value="P:nuclear-transcribed mRNA catabolic process, deadenylation-independent decay"/>
    <property type="evidence" value="ECO:0000314"/>
    <property type="project" value="UniProtKB"/>
</dbReference>
<dbReference type="GO" id="GO:1900153">
    <property type="term" value="P:positive regulation of nuclear-transcribed mRNA catabolic process, deadenylation-dependent decay"/>
    <property type="evidence" value="ECO:0000314"/>
    <property type="project" value="UniProtKB"/>
</dbReference>
<dbReference type="GO" id="GO:0048793">
    <property type="term" value="P:pronephros development"/>
    <property type="evidence" value="ECO:0000250"/>
    <property type="project" value="UniProtKB"/>
</dbReference>
<dbReference type="GO" id="GO:0045577">
    <property type="term" value="P:regulation of B cell differentiation"/>
    <property type="evidence" value="ECO:0000250"/>
    <property type="project" value="UniProtKB"/>
</dbReference>
<dbReference type="GO" id="GO:0043488">
    <property type="term" value="P:regulation of mRNA stability"/>
    <property type="evidence" value="ECO:0000250"/>
    <property type="project" value="UniProtKB"/>
</dbReference>
<dbReference type="GO" id="GO:0048103">
    <property type="term" value="P:somatic stem cell division"/>
    <property type="evidence" value="ECO:0000250"/>
    <property type="project" value="UniProtKB"/>
</dbReference>
<dbReference type="GO" id="GO:0035019">
    <property type="term" value="P:somatic stem cell population maintenance"/>
    <property type="evidence" value="ECO:0000250"/>
    <property type="project" value="UniProtKB"/>
</dbReference>
<dbReference type="FunFam" id="4.10.1000.10:FF:000001">
    <property type="entry name" value="zinc finger CCCH domain-containing protein 15-like"/>
    <property type="match status" value="1"/>
</dbReference>
<dbReference type="FunFam" id="4.10.1000.10:FF:000002">
    <property type="entry name" value="Zinc finger protein 36, C3H1 type-like 1"/>
    <property type="match status" value="1"/>
</dbReference>
<dbReference type="Gene3D" id="4.10.1000.10">
    <property type="entry name" value="Zinc finger, CCCH-type"/>
    <property type="match status" value="2"/>
</dbReference>
<dbReference type="InterPro" id="IPR007635">
    <property type="entry name" value="Tis11B_N"/>
</dbReference>
<dbReference type="InterPro" id="IPR045877">
    <property type="entry name" value="ZFP36-like"/>
</dbReference>
<dbReference type="InterPro" id="IPR000571">
    <property type="entry name" value="Znf_CCCH"/>
</dbReference>
<dbReference type="InterPro" id="IPR036855">
    <property type="entry name" value="Znf_CCCH_sf"/>
</dbReference>
<dbReference type="PANTHER" id="PTHR12547">
    <property type="entry name" value="CCCH ZINC FINGER/TIS11-RELATED"/>
    <property type="match status" value="1"/>
</dbReference>
<dbReference type="PANTHER" id="PTHR12547:SF174">
    <property type="entry name" value="MRNA DECAY ACTIVATOR PROTEIN ZFP36L2"/>
    <property type="match status" value="1"/>
</dbReference>
<dbReference type="Pfam" id="PF04553">
    <property type="entry name" value="Tis11B_N"/>
    <property type="match status" value="1"/>
</dbReference>
<dbReference type="Pfam" id="PF00642">
    <property type="entry name" value="zf-CCCH"/>
    <property type="match status" value="2"/>
</dbReference>
<dbReference type="SMART" id="SM00356">
    <property type="entry name" value="ZnF_C3H1"/>
    <property type="match status" value="2"/>
</dbReference>
<dbReference type="SUPFAM" id="SSF90229">
    <property type="entry name" value="CCCH zinc finger"/>
    <property type="match status" value="2"/>
</dbReference>
<dbReference type="PROSITE" id="PS50103">
    <property type="entry name" value="ZF_C3H1"/>
    <property type="match status" value="2"/>
</dbReference>
<accession>Q7ZXW9</accession>
<accession>Q9W673</accession>
<evidence type="ECO:0000250" key="1">
    <source>
        <dbReference type="UniProtKB" id="P23949"/>
    </source>
</evidence>
<evidence type="ECO:0000250" key="2">
    <source>
        <dbReference type="UniProtKB" id="P47974"/>
    </source>
</evidence>
<evidence type="ECO:0000250" key="3">
    <source>
        <dbReference type="UniProtKB" id="Q805B4"/>
    </source>
</evidence>
<evidence type="ECO:0000255" key="4">
    <source>
        <dbReference type="PROSITE-ProRule" id="PRU00723"/>
    </source>
</evidence>
<evidence type="ECO:0000256" key="5">
    <source>
        <dbReference type="SAM" id="MobiDB-lite"/>
    </source>
</evidence>
<evidence type="ECO:0000269" key="6">
    <source>
    </source>
</evidence>
<evidence type="ECO:0000269" key="7">
    <source>
    </source>
</evidence>
<evidence type="ECO:0000269" key="8">
    <source>
    </source>
</evidence>
<evidence type="ECO:0000269" key="9">
    <source>
    </source>
</evidence>
<evidence type="ECO:0000303" key="10">
    <source>
    </source>
</evidence>
<evidence type="ECO:0000305" key="11"/>
<evidence type="ECO:0000312" key="12">
    <source>
        <dbReference type="EMBL" id="AAD24209.1"/>
    </source>
</evidence>
<evidence type="ECO:0000312" key="13">
    <source>
        <dbReference type="EMBL" id="AAH44086.1"/>
    </source>
</evidence>
<sequence length="363" mass="40078">MSATLLSAFYDIDLLYKNEKALNNLALSTMLDKKAVGSPVSSTNSNLFPGFLRRHSASNLQALSGSTNPAKFCHNNNNNQLNESAASSTALLNRENKFRDRSFSENGERSQHLLHLQQQQQKAGAQVNSTRYKTELCRPFEESGACKYGEKCQFAHGFHELRSLTRHPKYKTELCRTFHTIGFCPYGPRCHFIHNAEERRQAPGAGERPKLHHSLSFSGFPNHSLDSAPLLESPTSRTPPPQSSGSLYCQELLQLNNNNPCANNAFTFSGQELGLITPLAIHTQNSSYFRQPSSSPPLSFQPLRKVSESPVFDAPPSPPDSLSDRDSYLSGSLSSGSLSGSDSPTLDSNRRLPIFSRLSISDD</sequence>
<name>TISDA_XENLA</name>
<organism>
    <name type="scientific">Xenopus laevis</name>
    <name type="common">African clawed frog</name>
    <dbReference type="NCBI Taxonomy" id="8355"/>
    <lineage>
        <taxon>Eukaryota</taxon>
        <taxon>Metazoa</taxon>
        <taxon>Chordata</taxon>
        <taxon>Craniata</taxon>
        <taxon>Vertebrata</taxon>
        <taxon>Euteleostomi</taxon>
        <taxon>Amphibia</taxon>
        <taxon>Batrachia</taxon>
        <taxon>Anura</taxon>
        <taxon>Pipoidea</taxon>
        <taxon>Pipidae</taxon>
        <taxon>Xenopodinae</taxon>
        <taxon>Xenopus</taxon>
        <taxon>Xenopus</taxon>
    </lineage>
</organism>
<protein>
    <recommendedName>
        <fullName evidence="11">mRNA decay activator protein ZFP36L2-A</fullName>
    </recommendedName>
    <alternativeName>
        <fullName evidence="12">CCCH zinc finger protein 3-A</fullName>
        <shortName evidence="10">XC3H-3</shortName>
    </alternativeName>
    <alternativeName>
        <fullName>Zinc finger protein 36, C3H1 type-like 2-A</fullName>
    </alternativeName>
</protein>
<comment type="function">
    <text evidence="1 2 3 7 8 9">Zinc-finger RNA-binding protein that destabilizes several cytoplasmic AU-rich element (ARE)-containing mRNA transcripts by promoting their poly(A) tail removal or deadenylation, and hence provide a mechanism for attenuating protein synthesis (PubMed:10751406, PubMed:12748283). Acts as a 3'-untranslated region (UTR) ARE mRNA-binding adapter protein to communicate signaling events to the mRNA decay machinery (By similarity). Functions by recruiting the CCR4-NOT deadenylase complex and probably other components of the cytoplasmic RNA decay machinery to the bound ARE-containing mRNAs, and hence promotes ARE-mediated mRNA deadenylation and decay processes (By similarity). Binds to 3'-UTR ARE of numerous mRNAs (PubMed:12748283). Also induces the degradation of ARE-containing mRNAs even in absence of poly(A) tail (PubMed:10751406, PubMed:11279239). Required for tubulogenesis during pronephros development (By similarity).</text>
</comment>
<comment type="subcellular location">
    <subcellularLocation>
        <location evidence="1">Nucleus</location>
    </subcellularLocation>
    <subcellularLocation>
        <location evidence="1">Cytoplasm</location>
    </subcellularLocation>
    <text evidence="1">Shuttles between the nucleus and the cytoplasm in a XPO1/CRM1-dependent manner.</text>
</comment>
<comment type="tissue specificity">
    <text evidence="6">Widely expressed in adults.</text>
</comment>
<comment type="developmental stage">
    <text evidence="6">Expressed both maternally and zygotically.</text>
</comment>
<comment type="PTM">
    <text evidence="1 2">Phosphorylated (By similarity).</text>
</comment>
<comment type="sequence caution" evidence="11">
    <conflict type="miscellaneous discrepancy">
        <sequence resource="EMBL-CDS" id="AAD24209"/>
    </conflict>
    <text>Probable hybrid of the A and B paralogous sequences.</text>
</comment>